<gene>
    <name evidence="1" type="primary">rpsO</name>
    <name type="ordered locus">Rmet_0921</name>
</gene>
<organism>
    <name type="scientific">Cupriavidus metallidurans (strain ATCC 43123 / DSM 2839 / NBRC 102507 / CH34)</name>
    <name type="common">Ralstonia metallidurans</name>
    <dbReference type="NCBI Taxonomy" id="266264"/>
    <lineage>
        <taxon>Bacteria</taxon>
        <taxon>Pseudomonadati</taxon>
        <taxon>Pseudomonadota</taxon>
        <taxon>Betaproteobacteria</taxon>
        <taxon>Burkholderiales</taxon>
        <taxon>Burkholderiaceae</taxon>
        <taxon>Cupriavidus</taxon>
    </lineage>
</organism>
<proteinExistence type="inferred from homology"/>
<protein>
    <recommendedName>
        <fullName evidence="1">Small ribosomal subunit protein uS15</fullName>
    </recommendedName>
    <alternativeName>
        <fullName evidence="2">30S ribosomal protein S15</fullName>
    </alternativeName>
</protein>
<comment type="function">
    <text evidence="1">One of the primary rRNA binding proteins, it binds directly to 16S rRNA where it helps nucleate assembly of the platform of the 30S subunit by binding and bridging several RNA helices of the 16S rRNA.</text>
</comment>
<comment type="function">
    <text evidence="1">Forms an intersubunit bridge (bridge B4) with the 23S rRNA of the 50S subunit in the ribosome.</text>
</comment>
<comment type="subunit">
    <text evidence="1">Part of the 30S ribosomal subunit. Forms a bridge to the 50S subunit in the 70S ribosome, contacting the 23S rRNA.</text>
</comment>
<comment type="similarity">
    <text evidence="1">Belongs to the universal ribosomal protein uS15 family.</text>
</comment>
<name>RS15_CUPMC</name>
<sequence length="89" mass="10161">MATANINKSEIIAKFARGTNDTGSPEVQVALLTTRINELTPHFKANMKDHHSRRGLLRMVSRRRRLLDYLKASDADRYRALIEALGLRK</sequence>
<evidence type="ECO:0000255" key="1">
    <source>
        <dbReference type="HAMAP-Rule" id="MF_01343"/>
    </source>
</evidence>
<evidence type="ECO:0000305" key="2"/>
<feature type="chain" id="PRO_0000255517" description="Small ribosomal subunit protein uS15">
    <location>
        <begin position="1"/>
        <end position="89"/>
    </location>
</feature>
<keyword id="KW-1185">Reference proteome</keyword>
<keyword id="KW-0687">Ribonucleoprotein</keyword>
<keyword id="KW-0689">Ribosomal protein</keyword>
<keyword id="KW-0694">RNA-binding</keyword>
<keyword id="KW-0699">rRNA-binding</keyword>
<reference key="1">
    <citation type="journal article" date="2010" name="PLoS ONE">
        <title>The complete genome sequence of Cupriavidus metallidurans strain CH34, a master survivalist in harsh and anthropogenic environments.</title>
        <authorList>
            <person name="Janssen P.J."/>
            <person name="Van Houdt R."/>
            <person name="Moors H."/>
            <person name="Monsieurs P."/>
            <person name="Morin N."/>
            <person name="Michaux A."/>
            <person name="Benotmane M.A."/>
            <person name="Leys N."/>
            <person name="Vallaeys T."/>
            <person name="Lapidus A."/>
            <person name="Monchy S."/>
            <person name="Medigue C."/>
            <person name="Taghavi S."/>
            <person name="McCorkle S."/>
            <person name="Dunn J."/>
            <person name="van der Lelie D."/>
            <person name="Mergeay M."/>
        </authorList>
    </citation>
    <scope>NUCLEOTIDE SEQUENCE [LARGE SCALE GENOMIC DNA]</scope>
    <source>
        <strain>ATCC 43123 / DSM 2839 / NBRC 102507 / CH34</strain>
    </source>
</reference>
<dbReference type="EMBL" id="CP000352">
    <property type="protein sequence ID" value="ABF07807.1"/>
    <property type="molecule type" value="Genomic_DNA"/>
</dbReference>
<dbReference type="RefSeq" id="WP_008643336.1">
    <property type="nucleotide sequence ID" value="NC_007973.1"/>
</dbReference>
<dbReference type="SMR" id="Q1LPW9"/>
<dbReference type="STRING" id="266264.Rmet_0921"/>
<dbReference type="GeneID" id="60825408"/>
<dbReference type="KEGG" id="rme:Rmet_0921"/>
<dbReference type="eggNOG" id="COG0184">
    <property type="taxonomic scope" value="Bacteria"/>
</dbReference>
<dbReference type="HOGENOM" id="CLU_148518_0_0_4"/>
<dbReference type="Proteomes" id="UP000002429">
    <property type="component" value="Chromosome"/>
</dbReference>
<dbReference type="GO" id="GO:0022627">
    <property type="term" value="C:cytosolic small ribosomal subunit"/>
    <property type="evidence" value="ECO:0007669"/>
    <property type="project" value="TreeGrafter"/>
</dbReference>
<dbReference type="GO" id="GO:0019843">
    <property type="term" value="F:rRNA binding"/>
    <property type="evidence" value="ECO:0007669"/>
    <property type="project" value="UniProtKB-UniRule"/>
</dbReference>
<dbReference type="GO" id="GO:0003735">
    <property type="term" value="F:structural constituent of ribosome"/>
    <property type="evidence" value="ECO:0007669"/>
    <property type="project" value="InterPro"/>
</dbReference>
<dbReference type="GO" id="GO:0006412">
    <property type="term" value="P:translation"/>
    <property type="evidence" value="ECO:0007669"/>
    <property type="project" value="UniProtKB-UniRule"/>
</dbReference>
<dbReference type="CDD" id="cd00353">
    <property type="entry name" value="Ribosomal_S15p_S13e"/>
    <property type="match status" value="1"/>
</dbReference>
<dbReference type="FunFam" id="1.10.287.10:FF:000002">
    <property type="entry name" value="30S ribosomal protein S15"/>
    <property type="match status" value="1"/>
</dbReference>
<dbReference type="Gene3D" id="6.10.250.3130">
    <property type="match status" value="1"/>
</dbReference>
<dbReference type="Gene3D" id="1.10.287.10">
    <property type="entry name" value="S15/NS1, RNA-binding"/>
    <property type="match status" value="1"/>
</dbReference>
<dbReference type="HAMAP" id="MF_01343_B">
    <property type="entry name" value="Ribosomal_uS15_B"/>
    <property type="match status" value="1"/>
</dbReference>
<dbReference type="InterPro" id="IPR000589">
    <property type="entry name" value="Ribosomal_uS15"/>
</dbReference>
<dbReference type="InterPro" id="IPR005290">
    <property type="entry name" value="Ribosomal_uS15_bac-type"/>
</dbReference>
<dbReference type="InterPro" id="IPR009068">
    <property type="entry name" value="uS15_NS1_RNA-bd_sf"/>
</dbReference>
<dbReference type="NCBIfam" id="TIGR00952">
    <property type="entry name" value="S15_bact"/>
    <property type="match status" value="1"/>
</dbReference>
<dbReference type="PANTHER" id="PTHR23321">
    <property type="entry name" value="RIBOSOMAL PROTEIN S15, BACTERIAL AND ORGANELLAR"/>
    <property type="match status" value="1"/>
</dbReference>
<dbReference type="PANTHER" id="PTHR23321:SF26">
    <property type="entry name" value="SMALL RIBOSOMAL SUBUNIT PROTEIN US15M"/>
    <property type="match status" value="1"/>
</dbReference>
<dbReference type="Pfam" id="PF00312">
    <property type="entry name" value="Ribosomal_S15"/>
    <property type="match status" value="1"/>
</dbReference>
<dbReference type="SMART" id="SM01387">
    <property type="entry name" value="Ribosomal_S15"/>
    <property type="match status" value="1"/>
</dbReference>
<dbReference type="SUPFAM" id="SSF47060">
    <property type="entry name" value="S15/NS1 RNA-binding domain"/>
    <property type="match status" value="1"/>
</dbReference>
<dbReference type="PROSITE" id="PS00362">
    <property type="entry name" value="RIBOSOMAL_S15"/>
    <property type="match status" value="1"/>
</dbReference>
<accession>Q1LPW9</accession>